<keyword id="KW-0067">ATP-binding</keyword>
<keyword id="KW-0119">Carbohydrate metabolism</keyword>
<keyword id="KW-0299">Galactose metabolism</keyword>
<keyword id="KW-0418">Kinase</keyword>
<keyword id="KW-0547">Nucleotide-binding</keyword>
<keyword id="KW-0597">Phosphoprotein</keyword>
<keyword id="KW-1185">Reference proteome</keyword>
<keyword id="KW-0808">Transferase</keyword>
<proteinExistence type="evidence at transcript level"/>
<evidence type="ECO:0000250" key="1">
    <source>
        <dbReference type="UniProtKB" id="P04385"/>
    </source>
</evidence>
<evidence type="ECO:0000250" key="2">
    <source>
        <dbReference type="UniProtKB" id="P51570"/>
    </source>
</evidence>
<evidence type="ECO:0000250" key="3">
    <source>
        <dbReference type="UniProtKB" id="Q9HHB6"/>
    </source>
</evidence>
<evidence type="ECO:0000305" key="4"/>
<sequence>MAASSPPRAGELLAEARRAFREEFGAEPELAVSAPGRVNLIGEHTDYNQGLVLPMALELVTVLVGSPRADGLVSLLTTSEDADEPRRLQFPLPTAQRSLEPGTPRWANYVKGVIQHYPAAPLPGFSAVVVSSVPLGGGLSSSASLEVATYTFLQQLCPDSGSVAARAQVCQQAEHSFAGVPCGIMDQLIALLGQEGHALLIDCRSLETSLVPLSEPKLAVLITNSNVRHSLGSSEYPLRRRQCEEVARALGKESLREVQLEELEAGRELVSKEGFRRARHVVGEIRRTAQAAAALCRGDYRAFGRLMVESHHSLRDDYEVSCPELDQLVEAALSAPGVYGSRMTGGGFGGCTVTLLEASFTSQVMQHIQEQYSGTATFYLSQAADGAKVLHW</sequence>
<gene>
    <name type="primary">GALK1</name>
</gene>
<comment type="function">
    <text evidence="2">Catalyzes the transfer of a phosphate from ATP to alpha-D-galactose and participates in the first committed step in the catabolism of galactose.</text>
</comment>
<comment type="catalytic activity">
    <reaction evidence="2">
        <text>alpha-D-galactose + ATP = alpha-D-galactose 1-phosphate + ADP + H(+)</text>
        <dbReference type="Rhea" id="RHEA:13553"/>
        <dbReference type="ChEBI" id="CHEBI:15378"/>
        <dbReference type="ChEBI" id="CHEBI:28061"/>
        <dbReference type="ChEBI" id="CHEBI:30616"/>
        <dbReference type="ChEBI" id="CHEBI:58336"/>
        <dbReference type="ChEBI" id="CHEBI:456216"/>
        <dbReference type="EC" id="2.7.1.6"/>
    </reaction>
    <physiologicalReaction direction="left-to-right" evidence="2">
        <dbReference type="Rhea" id="RHEA:13554"/>
    </physiologicalReaction>
</comment>
<comment type="pathway">
    <text evidence="2">Carbohydrate metabolism; galactose metabolism.</text>
</comment>
<comment type="subunit">
    <text evidence="2">Homodimer.</text>
</comment>
<comment type="similarity">
    <text evidence="4">Belongs to the GHMP kinase family. GalK subfamily.</text>
</comment>
<dbReference type="EC" id="2.7.1.6" evidence="2"/>
<dbReference type="EMBL" id="AF213513">
    <property type="protein sequence ID" value="AAG43832.1"/>
    <property type="molecule type" value="mRNA"/>
</dbReference>
<dbReference type="EMBL" id="AF454963">
    <property type="protein sequence ID" value="AAO15527.1"/>
    <property type="molecule type" value="Genomic_DNA"/>
</dbReference>
<dbReference type="EMBL" id="AY267338">
    <property type="protein sequence ID" value="AAP31026.1"/>
    <property type="molecule type" value="Genomic_DNA"/>
</dbReference>
<dbReference type="RefSeq" id="NP_001003104.1">
    <property type="nucleotide sequence ID" value="NM_001003104.2"/>
</dbReference>
<dbReference type="SMR" id="Q9GKK4"/>
<dbReference type="FunCoup" id="Q9GKK4">
    <property type="interactions" value="54"/>
</dbReference>
<dbReference type="STRING" id="9615.ENSCAFP00000045277"/>
<dbReference type="PaxDb" id="9612-ENSCAFP00000007327"/>
<dbReference type="Ensembl" id="ENSCAFT00030008166.1">
    <property type="protein sequence ID" value="ENSCAFP00030007172.1"/>
    <property type="gene ID" value="ENSCAFG00030004437.1"/>
</dbReference>
<dbReference type="GeneID" id="403694"/>
<dbReference type="KEGG" id="cfa:403694"/>
<dbReference type="CTD" id="2584"/>
<dbReference type="eggNOG" id="KOG0631">
    <property type="taxonomic scope" value="Eukaryota"/>
</dbReference>
<dbReference type="HOGENOM" id="CLU_017814_2_0_1"/>
<dbReference type="InParanoid" id="Q9GKK4"/>
<dbReference type="OMA" id="VMPCAIN"/>
<dbReference type="OrthoDB" id="275179at2759"/>
<dbReference type="TreeFam" id="TF354326"/>
<dbReference type="BRENDA" id="2.7.1.6">
    <property type="organism ID" value="1153"/>
</dbReference>
<dbReference type="Reactome" id="R-CFA-70370">
    <property type="pathway name" value="Galactose catabolism"/>
</dbReference>
<dbReference type="UniPathway" id="UPA00214"/>
<dbReference type="Proteomes" id="UP000002254">
    <property type="component" value="Unplaced"/>
</dbReference>
<dbReference type="Proteomes" id="UP000694429">
    <property type="component" value="Chromosome 9"/>
</dbReference>
<dbReference type="Proteomes" id="UP000694542">
    <property type="component" value="Unplaced"/>
</dbReference>
<dbReference type="Proteomes" id="UP000805418">
    <property type="component" value="Unplaced"/>
</dbReference>
<dbReference type="Bgee" id="ENSCAFG00000004914">
    <property type="expression patterns" value="Expressed in granulocyte and 46 other cell types or tissues"/>
</dbReference>
<dbReference type="GO" id="GO:0005737">
    <property type="term" value="C:cytoplasm"/>
    <property type="evidence" value="ECO:0000250"/>
    <property type="project" value="UniProtKB"/>
</dbReference>
<dbReference type="GO" id="GO:0005829">
    <property type="term" value="C:cytosol"/>
    <property type="evidence" value="ECO:0000318"/>
    <property type="project" value="GO_Central"/>
</dbReference>
<dbReference type="GO" id="GO:0005524">
    <property type="term" value="F:ATP binding"/>
    <property type="evidence" value="ECO:0000250"/>
    <property type="project" value="UniProtKB"/>
</dbReference>
<dbReference type="GO" id="GO:0004335">
    <property type="term" value="F:galactokinase activity"/>
    <property type="evidence" value="ECO:0000250"/>
    <property type="project" value="UniProtKB"/>
</dbReference>
<dbReference type="GO" id="GO:0005534">
    <property type="term" value="F:galactose binding"/>
    <property type="evidence" value="ECO:0000250"/>
    <property type="project" value="UniProtKB"/>
</dbReference>
<dbReference type="GO" id="GO:0006012">
    <property type="term" value="P:galactose metabolic process"/>
    <property type="evidence" value="ECO:0000250"/>
    <property type="project" value="UniProtKB"/>
</dbReference>
<dbReference type="FunFam" id="3.30.230.10:FF:000040">
    <property type="entry name" value="Galactokinase 1"/>
    <property type="match status" value="1"/>
</dbReference>
<dbReference type="FunFam" id="3.30.70.890:FF:000007">
    <property type="entry name" value="Galactokinase 1"/>
    <property type="match status" value="1"/>
</dbReference>
<dbReference type="Gene3D" id="3.30.230.10">
    <property type="match status" value="1"/>
</dbReference>
<dbReference type="Gene3D" id="3.30.70.890">
    <property type="entry name" value="GHMP kinase, C-terminal domain"/>
    <property type="match status" value="1"/>
</dbReference>
<dbReference type="InterPro" id="IPR000705">
    <property type="entry name" value="Galactokinase"/>
</dbReference>
<dbReference type="InterPro" id="IPR019741">
    <property type="entry name" value="Galactokinase_CS"/>
</dbReference>
<dbReference type="InterPro" id="IPR019539">
    <property type="entry name" value="GalKase_N"/>
</dbReference>
<dbReference type="InterPro" id="IPR013750">
    <property type="entry name" value="GHMP_kinase_C_dom"/>
</dbReference>
<dbReference type="InterPro" id="IPR036554">
    <property type="entry name" value="GHMP_kinase_C_sf"/>
</dbReference>
<dbReference type="InterPro" id="IPR006204">
    <property type="entry name" value="GHMP_kinase_N_dom"/>
</dbReference>
<dbReference type="InterPro" id="IPR006203">
    <property type="entry name" value="GHMP_knse_ATP-bd_CS"/>
</dbReference>
<dbReference type="InterPro" id="IPR006206">
    <property type="entry name" value="Mevalonate/galactokinase"/>
</dbReference>
<dbReference type="InterPro" id="IPR020568">
    <property type="entry name" value="Ribosomal_Su5_D2-typ_SF"/>
</dbReference>
<dbReference type="InterPro" id="IPR014721">
    <property type="entry name" value="Ribsml_uS5_D2-typ_fold_subgr"/>
</dbReference>
<dbReference type="NCBIfam" id="TIGR00131">
    <property type="entry name" value="gal_kin"/>
    <property type="match status" value="1"/>
</dbReference>
<dbReference type="PANTHER" id="PTHR10457:SF7">
    <property type="entry name" value="GALACTOKINASE-RELATED"/>
    <property type="match status" value="1"/>
</dbReference>
<dbReference type="PANTHER" id="PTHR10457">
    <property type="entry name" value="MEVALONATE KINASE/GALACTOKINASE"/>
    <property type="match status" value="1"/>
</dbReference>
<dbReference type="Pfam" id="PF10509">
    <property type="entry name" value="GalKase_gal_bdg"/>
    <property type="match status" value="1"/>
</dbReference>
<dbReference type="Pfam" id="PF08544">
    <property type="entry name" value="GHMP_kinases_C"/>
    <property type="match status" value="1"/>
</dbReference>
<dbReference type="Pfam" id="PF00288">
    <property type="entry name" value="GHMP_kinases_N"/>
    <property type="match status" value="1"/>
</dbReference>
<dbReference type="PIRSF" id="PIRSF000530">
    <property type="entry name" value="Galactokinase"/>
    <property type="match status" value="1"/>
</dbReference>
<dbReference type="PRINTS" id="PR00473">
    <property type="entry name" value="GALCTOKINASE"/>
</dbReference>
<dbReference type="PRINTS" id="PR00959">
    <property type="entry name" value="MEVGALKINASE"/>
</dbReference>
<dbReference type="SUPFAM" id="SSF55060">
    <property type="entry name" value="GHMP Kinase, C-terminal domain"/>
    <property type="match status" value="1"/>
</dbReference>
<dbReference type="SUPFAM" id="SSF54211">
    <property type="entry name" value="Ribosomal protein S5 domain 2-like"/>
    <property type="match status" value="1"/>
</dbReference>
<dbReference type="PROSITE" id="PS00106">
    <property type="entry name" value="GALACTOKINASE"/>
    <property type="match status" value="1"/>
</dbReference>
<dbReference type="PROSITE" id="PS00627">
    <property type="entry name" value="GHMP_KINASES_ATP"/>
    <property type="match status" value="1"/>
</dbReference>
<accession>Q9GKK4</accession>
<protein>
    <recommendedName>
        <fullName>Galactokinase</fullName>
        <ecNumber evidence="2">2.7.1.6</ecNumber>
    </recommendedName>
    <alternativeName>
        <fullName>Galactose kinase</fullName>
    </alternativeName>
</protein>
<feature type="chain" id="PRO_0000184644" description="Galactokinase">
    <location>
        <begin position="1"/>
        <end position="392"/>
    </location>
</feature>
<feature type="active site" description="Proton acceptor" evidence="3">
    <location>
        <position position="186"/>
    </location>
</feature>
<feature type="binding site" evidence="1">
    <location>
        <position position="37"/>
    </location>
    <ligand>
        <name>alpha-D-galactose</name>
        <dbReference type="ChEBI" id="CHEBI:28061"/>
    </ligand>
</feature>
<feature type="binding site" evidence="1">
    <location>
        <position position="43"/>
    </location>
    <ligand>
        <name>alpha-D-galactose</name>
        <dbReference type="ChEBI" id="CHEBI:28061"/>
    </ligand>
</feature>
<feature type="binding site" evidence="1">
    <location>
        <position position="44"/>
    </location>
    <ligand>
        <name>alpha-D-galactose</name>
        <dbReference type="ChEBI" id="CHEBI:28061"/>
    </ligand>
</feature>
<feature type="binding site" evidence="1">
    <location>
        <position position="46"/>
    </location>
    <ligand>
        <name>alpha-D-galactose</name>
        <dbReference type="ChEBI" id="CHEBI:28061"/>
    </ligand>
</feature>
<feature type="binding site" evidence="1">
    <location>
        <position position="136"/>
    </location>
    <ligand>
        <name>ATP</name>
        <dbReference type="ChEBI" id="CHEBI:30616"/>
    </ligand>
</feature>
<feature type="binding site" evidence="1">
    <location>
        <position position="138"/>
    </location>
    <ligand>
        <name>ATP</name>
        <dbReference type="ChEBI" id="CHEBI:30616"/>
    </ligand>
</feature>
<feature type="binding site" evidence="1">
    <location>
        <position position="140"/>
    </location>
    <ligand>
        <name>ATP</name>
        <dbReference type="ChEBI" id="CHEBI:30616"/>
    </ligand>
</feature>
<feature type="binding site" evidence="1">
    <location>
        <position position="141"/>
    </location>
    <ligand>
        <name>ATP</name>
        <dbReference type="ChEBI" id="CHEBI:30616"/>
    </ligand>
</feature>
<feature type="binding site" evidence="1">
    <location>
        <position position="186"/>
    </location>
    <ligand>
        <name>alpha-D-galactose</name>
        <dbReference type="ChEBI" id="CHEBI:28061"/>
    </ligand>
</feature>
<feature type="binding site" evidence="1">
    <location>
        <position position="236"/>
    </location>
    <ligand>
        <name>alpha-D-galactose</name>
        <dbReference type="ChEBI" id="CHEBI:28061"/>
    </ligand>
</feature>
<feature type="site" description="Transition state stabilizer" evidence="3">
    <location>
        <position position="37"/>
    </location>
</feature>
<feature type="modified residue" description="Phosphoserine" evidence="2">
    <location>
        <position position="230"/>
    </location>
</feature>
<name>GALK1_CANLF</name>
<organism>
    <name type="scientific">Canis lupus familiaris</name>
    <name type="common">Dog</name>
    <name type="synonym">Canis familiaris</name>
    <dbReference type="NCBI Taxonomy" id="9615"/>
    <lineage>
        <taxon>Eukaryota</taxon>
        <taxon>Metazoa</taxon>
        <taxon>Chordata</taxon>
        <taxon>Craniata</taxon>
        <taxon>Vertebrata</taxon>
        <taxon>Euteleostomi</taxon>
        <taxon>Mammalia</taxon>
        <taxon>Eutheria</taxon>
        <taxon>Laurasiatheria</taxon>
        <taxon>Carnivora</taxon>
        <taxon>Caniformia</taxon>
        <taxon>Canidae</taxon>
        <taxon>Canis</taxon>
    </lineage>
</organism>
<reference key="1">
    <citation type="submission" date="1999-12" db="EMBL/GenBank/DDBJ databases">
        <title>Identification and analysis of canine galactokinase (GALK1) cDNA.</title>
        <authorList>
            <person name="Sidjanin D.J."/>
        </authorList>
    </citation>
    <scope>NUCLEOTIDE SEQUENCE [MRNA]</scope>
</reference>
<reference key="2">
    <citation type="journal article" date="2003" name="Genomics">
        <title>Radiation hybrid map, physical map, and low-pass genomic sequence of the canine prcd region on CFA9 and comparative mapping with the syntenic region on human chromosome 17.</title>
        <authorList>
            <person name="Sidjanin D.J."/>
            <person name="Miller B."/>
            <person name="Kijas J."/>
            <person name="McElwee J."/>
            <person name="Pillardy J."/>
            <person name="Malek J."/>
            <person name="Pai G."/>
            <person name="Feldblyum T."/>
            <person name="Fraser C."/>
            <person name="Acland G."/>
            <person name="Aguirre G."/>
        </authorList>
    </citation>
    <scope>NUCLEOTIDE SEQUENCE [GENOMIC DNA]</scope>
</reference>
<reference key="3">
    <citation type="submission" date="2003-04" db="EMBL/GenBank/DDBJ databases">
        <title>Exon scan of the canine galactokinase (GALK1) gene in dog breeds affected with juvenile cataract.</title>
        <authorList>
            <person name="Graves K.T."/>
            <person name="Ennis R.B."/>
        </authorList>
    </citation>
    <scope>NUCLEOTIDE SEQUENCE [GENOMIC DNA]</scope>
</reference>